<accession>P50941</accession>
<evidence type="ECO:0000250" key="1"/>
<evidence type="ECO:0000255" key="2">
    <source>
        <dbReference type="PROSITE-ProRule" id="PRU10001"/>
    </source>
</evidence>
<evidence type="ECO:0000269" key="3">
    <source ref="4"/>
</evidence>
<evidence type="ECO:0000305" key="4"/>
<evidence type="ECO:0007829" key="5">
    <source>
        <dbReference type="PDB" id="3F9I"/>
    </source>
</evidence>
<organism>
    <name type="scientific">Rickettsia prowazekii (strain Madrid E)</name>
    <dbReference type="NCBI Taxonomy" id="272947"/>
    <lineage>
        <taxon>Bacteria</taxon>
        <taxon>Pseudomonadati</taxon>
        <taxon>Pseudomonadota</taxon>
        <taxon>Alphaproteobacteria</taxon>
        <taxon>Rickettsiales</taxon>
        <taxon>Rickettsiaceae</taxon>
        <taxon>Rickettsieae</taxon>
        <taxon>Rickettsia</taxon>
        <taxon>typhus group</taxon>
    </lineage>
</organism>
<keyword id="KW-0002">3D-structure</keyword>
<keyword id="KW-0275">Fatty acid biosynthesis</keyword>
<keyword id="KW-0276">Fatty acid metabolism</keyword>
<keyword id="KW-0444">Lipid biosynthesis</keyword>
<keyword id="KW-0443">Lipid metabolism</keyword>
<keyword id="KW-0521">NADP</keyword>
<keyword id="KW-0560">Oxidoreductase</keyword>
<keyword id="KW-1185">Reference proteome</keyword>
<reference key="1">
    <citation type="journal article" date="1998" name="Nature">
        <title>The genome sequence of Rickettsia prowazekii and the origin of mitochondria.</title>
        <authorList>
            <person name="Andersson S.G.E."/>
            <person name="Zomorodipour A."/>
            <person name="Andersson J.O."/>
            <person name="Sicheritz-Ponten T."/>
            <person name="Alsmark U.C.M."/>
            <person name="Podowski R.M."/>
            <person name="Naeslund A.K."/>
            <person name="Eriksson A.-S."/>
            <person name="Winkler H.H."/>
            <person name="Kurland C.G."/>
        </authorList>
    </citation>
    <scope>NUCLEOTIDE SEQUENCE [LARGE SCALE GENOMIC DNA]</scope>
    <source>
        <strain>Madrid E</strain>
    </source>
</reference>
<reference key="2">
    <citation type="journal article" date="1994" name="J. Bacteriol.">
        <title>Isolation and characterization of the Rickettsia prowazekii recA gene.</title>
        <authorList>
            <person name="Dunkin S.M."/>
            <person name="Winkler H.H."/>
            <person name="Wood D.O."/>
        </authorList>
    </citation>
    <scope>NUCLEOTIDE SEQUENCE [GENOMIC DNA] OF 1-41</scope>
    <source>
        <strain>Madrid E</strain>
    </source>
</reference>
<reference key="3">
    <citation type="journal article" date="1996" name="J. Mol. Evol.">
        <title>Codon usage and base composition in Rickettsia prowazekii.</title>
        <authorList>
            <person name="Andersson S.G.E."/>
            <person name="Sharp P.M."/>
        </authorList>
    </citation>
    <scope>IDENTIFICATION</scope>
</reference>
<reference key="4">
    <citation type="submission" date="2009-02" db="PDB data bank">
        <title>Crystal structure of 3-ketoacyl-(acyl-carrier-protein) reductase Rickettsia prowazekii.</title>
        <authorList>
            <consortium name="Joint center for structural genomics (JCSG)"/>
        </authorList>
    </citation>
    <scope>X-RAY CRYSTALLOGRAPHY (2.25 ANGSTROMS)</scope>
    <scope>SUBUNIT</scope>
</reference>
<proteinExistence type="evidence at protein level"/>
<sequence length="241" mass="25759">MIDLTGKTSLITGASSGIGSAIARLLHKLGSKVIISGSNEEKLKSLGNALKDNYTIEVCNLANKEECSNLISKTSNLDILVCNAGITSDTLAIRMKDQDFDKVIDINLKANFILNREAIKKMIQKRYGRIINISSIVGIAGNPGQANYCASKAGLIGMTKSLSYEVATRGITVNAVAPGFIKSDMTDKLNEKQREAIVQKIPLGTYGIPEDVAYAVAFLASNNASYITGQTLHVNGGMLMV</sequence>
<dbReference type="EC" id="1.1.1.100"/>
<dbReference type="EMBL" id="AJ235273">
    <property type="protein sequence ID" value="CAA15190.1"/>
    <property type="molecule type" value="Genomic_DNA"/>
</dbReference>
<dbReference type="EMBL" id="U01959">
    <property type="status" value="NOT_ANNOTATED_CDS"/>
    <property type="molecule type" value="Unassigned_DNA"/>
</dbReference>
<dbReference type="PIR" id="F71636">
    <property type="entry name" value="F71636"/>
</dbReference>
<dbReference type="RefSeq" id="NP_221114.1">
    <property type="nucleotide sequence ID" value="NC_000963.1"/>
</dbReference>
<dbReference type="RefSeq" id="WP_010886363.1">
    <property type="nucleotide sequence ID" value="NC_000963.1"/>
</dbReference>
<dbReference type="PDB" id="3F9I">
    <property type="method" value="X-ray"/>
    <property type="resolution" value="2.25 A"/>
    <property type="chains" value="A/B=1-241"/>
</dbReference>
<dbReference type="PDBsum" id="3F9I"/>
<dbReference type="SMR" id="P50941"/>
<dbReference type="STRING" id="272947.gene:17555832"/>
<dbReference type="EnsemblBacteria" id="CAA15190">
    <property type="protein sequence ID" value="CAA15190"/>
    <property type="gene ID" value="CAA15190"/>
</dbReference>
<dbReference type="KEGG" id="rpr:RP762"/>
<dbReference type="PATRIC" id="fig|272947.5.peg.798"/>
<dbReference type="eggNOG" id="COG1028">
    <property type="taxonomic scope" value="Bacteria"/>
</dbReference>
<dbReference type="HOGENOM" id="CLU_010194_1_3_5"/>
<dbReference type="OrthoDB" id="9804774at2"/>
<dbReference type="BRENDA" id="1.1.1.100">
    <property type="organism ID" value="5447"/>
</dbReference>
<dbReference type="UniPathway" id="UPA00094"/>
<dbReference type="EvolutionaryTrace" id="P50941"/>
<dbReference type="Proteomes" id="UP000002480">
    <property type="component" value="Chromosome"/>
</dbReference>
<dbReference type="GO" id="GO:0004316">
    <property type="term" value="F:3-oxoacyl-[acyl-carrier-protein] reductase (NADPH) activity"/>
    <property type="evidence" value="ECO:0000250"/>
    <property type="project" value="UniProtKB"/>
</dbReference>
<dbReference type="GO" id="GO:0051287">
    <property type="term" value="F:NAD binding"/>
    <property type="evidence" value="ECO:0007669"/>
    <property type="project" value="InterPro"/>
</dbReference>
<dbReference type="GO" id="GO:0050661">
    <property type="term" value="F:NADP binding"/>
    <property type="evidence" value="ECO:0000250"/>
    <property type="project" value="UniProtKB"/>
</dbReference>
<dbReference type="GO" id="GO:0030497">
    <property type="term" value="P:fatty acid elongation"/>
    <property type="evidence" value="ECO:0000250"/>
    <property type="project" value="UniProtKB"/>
</dbReference>
<dbReference type="CDD" id="cd05333">
    <property type="entry name" value="BKR_SDR_c"/>
    <property type="match status" value="1"/>
</dbReference>
<dbReference type="FunFam" id="3.40.50.720:FF:000806">
    <property type="entry name" value="3-oxoacyl-[acyl-carrier-protein] reductase FabG"/>
    <property type="match status" value="1"/>
</dbReference>
<dbReference type="Gene3D" id="3.40.50.720">
    <property type="entry name" value="NAD(P)-binding Rossmann-like Domain"/>
    <property type="match status" value="1"/>
</dbReference>
<dbReference type="InterPro" id="IPR011284">
    <property type="entry name" value="3oxo_ACP_reduc"/>
</dbReference>
<dbReference type="InterPro" id="IPR036291">
    <property type="entry name" value="NAD(P)-bd_dom_sf"/>
</dbReference>
<dbReference type="InterPro" id="IPR020904">
    <property type="entry name" value="Sc_DH/Rdtase_CS"/>
</dbReference>
<dbReference type="InterPro" id="IPR050259">
    <property type="entry name" value="SDR"/>
</dbReference>
<dbReference type="InterPro" id="IPR002347">
    <property type="entry name" value="SDR_fam"/>
</dbReference>
<dbReference type="NCBIfam" id="TIGR01830">
    <property type="entry name" value="3oxo_ACP_reduc"/>
    <property type="match status" value="1"/>
</dbReference>
<dbReference type="NCBIfam" id="NF004199">
    <property type="entry name" value="PRK05653.1-4"/>
    <property type="match status" value="1"/>
</dbReference>
<dbReference type="NCBIfam" id="NF005559">
    <property type="entry name" value="PRK07231.1"/>
    <property type="match status" value="1"/>
</dbReference>
<dbReference type="NCBIfam" id="NF009466">
    <property type="entry name" value="PRK12826.1-2"/>
    <property type="match status" value="1"/>
</dbReference>
<dbReference type="PANTHER" id="PTHR42879">
    <property type="entry name" value="3-OXOACYL-(ACYL-CARRIER-PROTEIN) REDUCTASE"/>
    <property type="match status" value="1"/>
</dbReference>
<dbReference type="PANTHER" id="PTHR42879:SF2">
    <property type="entry name" value="3-OXOACYL-[ACYL-CARRIER-PROTEIN] REDUCTASE FABG"/>
    <property type="match status" value="1"/>
</dbReference>
<dbReference type="Pfam" id="PF13561">
    <property type="entry name" value="adh_short_C2"/>
    <property type="match status" value="1"/>
</dbReference>
<dbReference type="PRINTS" id="PR00081">
    <property type="entry name" value="GDHRDH"/>
</dbReference>
<dbReference type="PRINTS" id="PR00080">
    <property type="entry name" value="SDRFAMILY"/>
</dbReference>
<dbReference type="SMART" id="SM00822">
    <property type="entry name" value="PKS_KR"/>
    <property type="match status" value="1"/>
</dbReference>
<dbReference type="SUPFAM" id="SSF51735">
    <property type="entry name" value="NAD(P)-binding Rossmann-fold domains"/>
    <property type="match status" value="1"/>
</dbReference>
<dbReference type="PROSITE" id="PS00061">
    <property type="entry name" value="ADH_SHORT"/>
    <property type="match status" value="1"/>
</dbReference>
<gene>
    <name type="primary">fabG</name>
    <name type="ordered locus">RP762</name>
</gene>
<comment type="function">
    <text evidence="1">Catalyzes the NADPH-dependent reduction of beta-ketoacyl-ACP substrates to beta-hydroxyacyl-ACP products, the first reductive step in the elongation cycle of fatty acid biosynthesis.</text>
</comment>
<comment type="catalytic activity">
    <reaction>
        <text>a (3R)-hydroxyacyl-[ACP] + NADP(+) = a 3-oxoacyl-[ACP] + NADPH + H(+)</text>
        <dbReference type="Rhea" id="RHEA:17397"/>
        <dbReference type="Rhea" id="RHEA-COMP:9916"/>
        <dbReference type="Rhea" id="RHEA-COMP:9945"/>
        <dbReference type="ChEBI" id="CHEBI:15378"/>
        <dbReference type="ChEBI" id="CHEBI:57783"/>
        <dbReference type="ChEBI" id="CHEBI:58349"/>
        <dbReference type="ChEBI" id="CHEBI:78776"/>
        <dbReference type="ChEBI" id="CHEBI:78827"/>
        <dbReference type="EC" id="1.1.1.100"/>
    </reaction>
</comment>
<comment type="pathway">
    <text>Lipid metabolism; fatty acid biosynthesis.</text>
</comment>
<comment type="subunit">
    <text evidence="3">Homotetramer.</text>
</comment>
<comment type="similarity">
    <text evidence="4">Belongs to the short-chain dehydrogenases/reductases (SDR) family.</text>
</comment>
<feature type="chain" id="PRO_0000054679" description="3-oxoacyl-[acyl-carrier-protein] reductase FabG">
    <location>
        <begin position="1"/>
        <end position="241"/>
    </location>
</feature>
<feature type="active site" description="Proton acceptor" evidence="2">
    <location>
        <position position="148"/>
    </location>
</feature>
<feature type="binding site" evidence="1">
    <location>
        <begin position="13"/>
        <end position="16"/>
    </location>
    <ligand>
        <name>NADP(+)</name>
        <dbReference type="ChEBI" id="CHEBI:58349"/>
    </ligand>
</feature>
<feature type="binding site" evidence="1">
    <location>
        <position position="38"/>
    </location>
    <ligand>
        <name>NADP(+)</name>
        <dbReference type="ChEBI" id="CHEBI:58349"/>
    </ligand>
</feature>
<feature type="binding site" evidence="1">
    <location>
        <begin position="57"/>
        <end position="58"/>
    </location>
    <ligand>
        <name>NADP(+)</name>
        <dbReference type="ChEBI" id="CHEBI:58349"/>
    </ligand>
</feature>
<feature type="binding site" evidence="1">
    <location>
        <position position="83"/>
    </location>
    <ligand>
        <name>NADP(+)</name>
        <dbReference type="ChEBI" id="CHEBI:58349"/>
    </ligand>
</feature>
<feature type="binding site" evidence="1">
    <location>
        <position position="135"/>
    </location>
    <ligand>
        <name>substrate</name>
    </ligand>
</feature>
<feature type="binding site" evidence="1">
    <location>
        <begin position="148"/>
        <end position="152"/>
    </location>
    <ligand>
        <name>NADP(+)</name>
        <dbReference type="ChEBI" id="CHEBI:58349"/>
    </ligand>
</feature>
<feature type="binding site" evidence="1">
    <location>
        <position position="181"/>
    </location>
    <ligand>
        <name>NADP(+)</name>
        <dbReference type="ChEBI" id="CHEBI:58349"/>
    </ligand>
</feature>
<feature type="strand" evidence="5">
    <location>
        <begin position="8"/>
        <end position="11"/>
    </location>
</feature>
<feature type="turn" evidence="5">
    <location>
        <begin position="12"/>
        <end position="15"/>
    </location>
</feature>
<feature type="helix" evidence="5">
    <location>
        <begin position="17"/>
        <end position="28"/>
    </location>
</feature>
<feature type="strand" evidence="5">
    <location>
        <begin position="32"/>
        <end position="38"/>
    </location>
</feature>
<feature type="helix" evidence="5">
    <location>
        <begin position="40"/>
        <end position="50"/>
    </location>
</feature>
<feature type="strand" evidence="5">
    <location>
        <begin position="52"/>
        <end position="58"/>
    </location>
</feature>
<feature type="helix" evidence="5">
    <location>
        <begin position="64"/>
        <end position="72"/>
    </location>
</feature>
<feature type="strand" evidence="5">
    <location>
        <begin position="78"/>
        <end position="82"/>
    </location>
</feature>
<feature type="helix" evidence="5">
    <location>
        <begin position="100"/>
        <end position="107"/>
    </location>
</feature>
<feature type="helix" evidence="5">
    <location>
        <begin position="109"/>
        <end position="125"/>
    </location>
</feature>
<feature type="strand" evidence="5">
    <location>
        <begin position="128"/>
        <end position="133"/>
    </location>
</feature>
<feature type="helix" evidence="5">
    <location>
        <begin position="146"/>
        <end position="166"/>
    </location>
</feature>
<feature type="helix" evidence="5">
    <location>
        <begin position="167"/>
        <end position="169"/>
    </location>
</feature>
<feature type="strand" evidence="5">
    <location>
        <begin position="171"/>
        <end position="178"/>
    </location>
</feature>
<feature type="helix" evidence="5">
    <location>
        <begin position="191"/>
        <end position="200"/>
    </location>
</feature>
<feature type="helix" evidence="5">
    <location>
        <begin position="209"/>
        <end position="220"/>
    </location>
</feature>
<feature type="helix" evidence="5">
    <location>
        <begin position="222"/>
        <end position="224"/>
    </location>
</feature>
<feature type="strand" evidence="5">
    <location>
        <begin position="231"/>
        <end position="235"/>
    </location>
</feature>
<protein>
    <recommendedName>
        <fullName>3-oxoacyl-[acyl-carrier-protein] reductase FabG</fullName>
        <ecNumber>1.1.1.100</ecNumber>
    </recommendedName>
    <alternativeName>
        <fullName>3-ketoacyl-acyl carrier protein reductase</fullName>
    </alternativeName>
    <alternativeName>
        <fullName>Beta-Ketoacyl-acyl carrier protein reductase</fullName>
    </alternativeName>
    <alternativeName>
        <fullName>Beta-ketoacyl-ACP reductase</fullName>
    </alternativeName>
</protein>
<name>FABG_RICPR</name>